<accession>Q295P6</accession>
<proteinExistence type="inferred from homology"/>
<gene>
    <name type="ORF">GA11319</name>
</gene>
<dbReference type="EC" id="3.5.4.-"/>
<dbReference type="EMBL" id="CM000070">
    <property type="protein sequence ID" value="EAL28662.2"/>
    <property type="molecule type" value="Genomic_DNA"/>
</dbReference>
<dbReference type="RefSeq" id="XP_001359516.2">
    <property type="nucleotide sequence ID" value="XM_001359479.3"/>
</dbReference>
<dbReference type="SMR" id="Q295P6"/>
<dbReference type="FunCoup" id="Q295P6">
    <property type="interactions" value="1257"/>
</dbReference>
<dbReference type="STRING" id="46245.Q295P6"/>
<dbReference type="EnsemblMetazoa" id="FBtr0286110">
    <property type="protein sequence ID" value="FBpp0284548"/>
    <property type="gene ID" value="FBgn0071373"/>
</dbReference>
<dbReference type="KEGG" id="dpo:4802632"/>
<dbReference type="CTD" id="100"/>
<dbReference type="eggNOG" id="KOG1097">
    <property type="taxonomic scope" value="Eukaryota"/>
</dbReference>
<dbReference type="HOGENOM" id="CLU_039228_3_0_1"/>
<dbReference type="InParanoid" id="Q295P6"/>
<dbReference type="OMA" id="RPQFKPY"/>
<dbReference type="Proteomes" id="UP000001819">
    <property type="component" value="Chromosome 2"/>
</dbReference>
<dbReference type="Bgee" id="FBgn0071373">
    <property type="expression patterns" value="Expressed in female reproductive system and 3 other cell types or tissues"/>
</dbReference>
<dbReference type="GO" id="GO:0004000">
    <property type="term" value="F:adenosine deaminase activity"/>
    <property type="evidence" value="ECO:0007669"/>
    <property type="project" value="TreeGrafter"/>
</dbReference>
<dbReference type="GO" id="GO:0046872">
    <property type="term" value="F:metal ion binding"/>
    <property type="evidence" value="ECO:0007669"/>
    <property type="project" value="UniProtKB-KW"/>
</dbReference>
<dbReference type="GO" id="GO:0062154">
    <property type="term" value="F:N6-methyl-AMP deaminase activity"/>
    <property type="evidence" value="ECO:0007669"/>
    <property type="project" value="RHEA"/>
</dbReference>
<dbReference type="GO" id="GO:0006154">
    <property type="term" value="P:adenosine catabolic process"/>
    <property type="evidence" value="ECO:0007669"/>
    <property type="project" value="TreeGrafter"/>
</dbReference>
<dbReference type="GO" id="GO:0046103">
    <property type="term" value="P:inosine biosynthetic process"/>
    <property type="evidence" value="ECO:0007669"/>
    <property type="project" value="TreeGrafter"/>
</dbReference>
<dbReference type="GO" id="GO:0009117">
    <property type="term" value="P:nucleotide metabolic process"/>
    <property type="evidence" value="ECO:0007669"/>
    <property type="project" value="UniProtKB-KW"/>
</dbReference>
<dbReference type="CDD" id="cd00443">
    <property type="entry name" value="ADA_AMPD"/>
    <property type="match status" value="1"/>
</dbReference>
<dbReference type="FunFam" id="3.20.20.140:FF:000033">
    <property type="entry name" value="Adenosine deaminase-like protein"/>
    <property type="match status" value="1"/>
</dbReference>
<dbReference type="Gene3D" id="3.20.20.140">
    <property type="entry name" value="Metal-dependent hydrolases"/>
    <property type="match status" value="1"/>
</dbReference>
<dbReference type="InterPro" id="IPR001365">
    <property type="entry name" value="A_deaminase_dom"/>
</dbReference>
<dbReference type="InterPro" id="IPR006330">
    <property type="entry name" value="Ado/ade_deaminase"/>
</dbReference>
<dbReference type="InterPro" id="IPR032466">
    <property type="entry name" value="Metal_Hydrolase"/>
</dbReference>
<dbReference type="PANTHER" id="PTHR11409">
    <property type="entry name" value="ADENOSINE DEAMINASE"/>
    <property type="match status" value="1"/>
</dbReference>
<dbReference type="PANTHER" id="PTHR11409:SF42">
    <property type="entry name" value="ADENOSINE DEAMINASE-LIKE PROTEIN"/>
    <property type="match status" value="1"/>
</dbReference>
<dbReference type="Pfam" id="PF00962">
    <property type="entry name" value="A_deaminase"/>
    <property type="match status" value="1"/>
</dbReference>
<dbReference type="SUPFAM" id="SSF51556">
    <property type="entry name" value="Metallo-dependent hydrolases"/>
    <property type="match status" value="1"/>
</dbReference>
<reference key="1">
    <citation type="journal article" date="2005" name="Genome Res.">
        <title>Comparative genome sequencing of Drosophila pseudoobscura: chromosomal, gene, and cis-element evolution.</title>
        <authorList>
            <person name="Richards S."/>
            <person name="Liu Y."/>
            <person name="Bettencourt B.R."/>
            <person name="Hradecky P."/>
            <person name="Letovsky S."/>
            <person name="Nielsen R."/>
            <person name="Thornton K."/>
            <person name="Hubisz M.J."/>
            <person name="Chen R."/>
            <person name="Meisel R.P."/>
            <person name="Couronne O."/>
            <person name="Hua S."/>
            <person name="Smith M.A."/>
            <person name="Zhang P."/>
            <person name="Liu J."/>
            <person name="Bussemaker H.J."/>
            <person name="van Batenburg M.F."/>
            <person name="Howells S.L."/>
            <person name="Scherer S.E."/>
            <person name="Sodergren E."/>
            <person name="Matthews B.B."/>
            <person name="Crosby M.A."/>
            <person name="Schroeder A.J."/>
            <person name="Ortiz-Barrientos D."/>
            <person name="Rives C.M."/>
            <person name="Metzker M.L."/>
            <person name="Muzny D.M."/>
            <person name="Scott G."/>
            <person name="Steffen D."/>
            <person name="Wheeler D.A."/>
            <person name="Worley K.C."/>
            <person name="Havlak P."/>
            <person name="Durbin K.J."/>
            <person name="Egan A."/>
            <person name="Gill R."/>
            <person name="Hume J."/>
            <person name="Morgan M.B."/>
            <person name="Miner G."/>
            <person name="Hamilton C."/>
            <person name="Huang Y."/>
            <person name="Waldron L."/>
            <person name="Verduzco D."/>
            <person name="Clerc-Blankenburg K.P."/>
            <person name="Dubchak I."/>
            <person name="Noor M.A.F."/>
            <person name="Anderson W."/>
            <person name="White K.P."/>
            <person name="Clark A.G."/>
            <person name="Schaeffer S.W."/>
            <person name="Gelbart W.M."/>
            <person name="Weinstock G.M."/>
            <person name="Gibbs R.A."/>
        </authorList>
    </citation>
    <scope>NUCLEOTIDE SEQUENCE [LARGE SCALE GENOMIC DNA]</scope>
    <source>
        <strain>MV2-25 / Tucson 14011-0121.94</strain>
    </source>
</reference>
<protein>
    <recommendedName>
        <fullName>Adenosine deaminase-like protein</fullName>
        <ecNumber>3.5.4.-</ecNumber>
    </recommendedName>
</protein>
<name>ADAL_DROPS</name>
<evidence type="ECO:0000250" key="1">
    <source>
        <dbReference type="UniProtKB" id="P03958"/>
    </source>
</evidence>
<evidence type="ECO:0000250" key="2">
    <source>
        <dbReference type="UniProtKB" id="Q6DHV7"/>
    </source>
</evidence>
<evidence type="ECO:0000250" key="3">
    <source>
        <dbReference type="UniProtKB" id="Q8LPL7"/>
    </source>
</evidence>
<evidence type="ECO:0000305" key="4"/>
<comment type="function">
    <text evidence="2">Catalyzes the hydrolysis of the free cytosolic methylated adenosine nucleotide N(6)-methyl-AMP (N6-mAMP) to produce inositol monophosphate (IMP) and methylamine. Is required for the catabolism of cytosolic N6-mAMP, which is derived from the degradation of mRNA containing N6-methylated adenine (m6A).</text>
</comment>
<comment type="catalytic activity">
    <reaction evidence="2">
        <text>N(6)-methyl-AMP + H2O + H(+) = IMP + methylamine</text>
        <dbReference type="Rhea" id="RHEA:16001"/>
        <dbReference type="ChEBI" id="CHEBI:15377"/>
        <dbReference type="ChEBI" id="CHEBI:15378"/>
        <dbReference type="ChEBI" id="CHEBI:58053"/>
        <dbReference type="ChEBI" id="CHEBI:59338"/>
        <dbReference type="ChEBI" id="CHEBI:144842"/>
    </reaction>
    <physiologicalReaction direction="left-to-right" evidence="2">
        <dbReference type="Rhea" id="RHEA:16002"/>
    </physiologicalReaction>
</comment>
<comment type="cofactor">
    <cofactor evidence="2">
        <name>Zn(2+)</name>
        <dbReference type="ChEBI" id="CHEBI:29105"/>
    </cofactor>
    <text evidence="2">Binds 1 zinc ion per subunit.</text>
</comment>
<comment type="subunit">
    <text evidence="2">Monomer.</text>
</comment>
<comment type="similarity">
    <text evidence="4">Belongs to the metallo-dependent hydrolases superfamily. Adenosine and AMP deaminases family.</text>
</comment>
<feature type="chain" id="PRO_0000285095" description="Adenosine deaminase-like protein">
    <location>
        <begin position="1"/>
        <end position="340"/>
    </location>
</feature>
<feature type="active site" description="Proton donor" evidence="1">
    <location>
        <position position="203"/>
    </location>
</feature>
<feature type="binding site" evidence="3">
    <location>
        <position position="14"/>
    </location>
    <ligand>
        <name>Zn(2+)</name>
        <dbReference type="ChEBI" id="CHEBI:29105"/>
        <note>catalytic</note>
    </ligand>
</feature>
<feature type="binding site" evidence="3">
    <location>
        <position position="16"/>
    </location>
    <ligand>
        <name>N(6)-methyl-AMP</name>
        <dbReference type="ChEBI" id="CHEBI:144842"/>
    </ligand>
</feature>
<feature type="binding site" evidence="3">
    <location>
        <position position="16"/>
    </location>
    <ligand>
        <name>Zn(2+)</name>
        <dbReference type="ChEBI" id="CHEBI:29105"/>
        <note>catalytic</note>
    </ligand>
</feature>
<feature type="binding site" evidence="3">
    <location>
        <position position="18"/>
    </location>
    <ligand>
        <name>N(6)-methyl-AMP</name>
        <dbReference type="ChEBI" id="CHEBI:144842"/>
    </ligand>
</feature>
<feature type="binding site" evidence="3">
    <location>
        <position position="68"/>
    </location>
    <ligand>
        <name>N(6)-methyl-AMP</name>
        <dbReference type="ChEBI" id="CHEBI:144842"/>
    </ligand>
</feature>
<feature type="binding site" evidence="3">
    <location>
        <begin position="100"/>
        <end position="103"/>
    </location>
    <ligand>
        <name>N(6)-methyl-AMP</name>
        <dbReference type="ChEBI" id="CHEBI:144842"/>
    </ligand>
</feature>
<feature type="binding site" evidence="3">
    <location>
        <position position="173"/>
    </location>
    <ligand>
        <name>N(6)-methyl-AMP</name>
        <dbReference type="ChEBI" id="CHEBI:144842"/>
    </ligand>
</feature>
<feature type="binding site" evidence="3">
    <location>
        <position position="200"/>
    </location>
    <ligand>
        <name>Zn(2+)</name>
        <dbReference type="ChEBI" id="CHEBI:29105"/>
        <note>catalytic</note>
    </ligand>
</feature>
<feature type="binding site" evidence="3">
    <location>
        <position position="203"/>
    </location>
    <ligand>
        <name>N(6)-methyl-AMP</name>
        <dbReference type="ChEBI" id="CHEBI:144842"/>
    </ligand>
</feature>
<feature type="binding site" evidence="3">
    <location>
        <position position="278"/>
    </location>
    <ligand>
        <name>N(6)-methyl-AMP</name>
        <dbReference type="ChEBI" id="CHEBI:144842"/>
    </ligand>
</feature>
<feature type="binding site" evidence="3">
    <location>
        <position position="278"/>
    </location>
    <ligand>
        <name>Zn(2+)</name>
        <dbReference type="ChEBI" id="CHEBI:29105"/>
        <note>catalytic</note>
    </ligand>
</feature>
<feature type="binding site" evidence="3">
    <location>
        <position position="279"/>
    </location>
    <ligand>
        <name>N(6)-methyl-AMP</name>
        <dbReference type="ChEBI" id="CHEBI:144842"/>
    </ligand>
</feature>
<feature type="site" description="Important for catalytic activity" evidence="1">
    <location>
        <position position="223"/>
    </location>
</feature>
<sequence>MWKFLKEMPKVELHAHLNGSLNTNSLQDLAEKVYGNTSEEFSHLCARFVNFEKDSNLDKCFEKFAFVHELTSTAAGLQYATELVIRDFANDNIQYLELRTTPKANKNYLRRDYLRIVLDTIKRSRKKYPNILVKLLPSINRSEPVAVAEETVALALEFAKTDPDLVVGIDLSGIPTKGKFTDFCGALDLARREGLKLVIHCAEIDNPPEIKEMLSFGMSRCGHGTYLTEEDFAQMKAANIPIECCLTSNIKSGSVSSFEEHHLKRLMESDAPRVVCTDDSGVFDTSLTNEFLLVVETFNVTRDQCIDLTLEAVKHSFASEQERQQMALKVEHYVNSLQTD</sequence>
<keyword id="KW-0378">Hydrolase</keyword>
<keyword id="KW-0479">Metal-binding</keyword>
<keyword id="KW-0546">Nucleotide metabolism</keyword>
<keyword id="KW-1185">Reference proteome</keyword>
<keyword id="KW-0862">Zinc</keyword>
<organism>
    <name type="scientific">Drosophila pseudoobscura pseudoobscura</name>
    <name type="common">Fruit fly</name>
    <dbReference type="NCBI Taxonomy" id="46245"/>
    <lineage>
        <taxon>Eukaryota</taxon>
        <taxon>Metazoa</taxon>
        <taxon>Ecdysozoa</taxon>
        <taxon>Arthropoda</taxon>
        <taxon>Hexapoda</taxon>
        <taxon>Insecta</taxon>
        <taxon>Pterygota</taxon>
        <taxon>Neoptera</taxon>
        <taxon>Endopterygota</taxon>
        <taxon>Diptera</taxon>
        <taxon>Brachycera</taxon>
        <taxon>Muscomorpha</taxon>
        <taxon>Ephydroidea</taxon>
        <taxon>Drosophilidae</taxon>
        <taxon>Drosophila</taxon>
        <taxon>Sophophora</taxon>
    </lineage>
</organism>